<protein>
    <recommendedName>
        <fullName evidence="1">4-hydroxy-tetrahydrodipicolinate reductase</fullName>
        <shortName evidence="1">HTPA reductase</shortName>
        <ecNumber evidence="1">1.17.1.8</ecNumber>
    </recommendedName>
</protein>
<accession>Q2YBT6</accession>
<gene>
    <name evidence="1" type="primary">dapB</name>
    <name type="ordered locus">Nmul_A0477</name>
</gene>
<proteinExistence type="inferred from homology"/>
<keyword id="KW-0028">Amino-acid biosynthesis</keyword>
<keyword id="KW-0963">Cytoplasm</keyword>
<keyword id="KW-0220">Diaminopimelate biosynthesis</keyword>
<keyword id="KW-0457">Lysine biosynthesis</keyword>
<keyword id="KW-0520">NAD</keyword>
<keyword id="KW-0521">NADP</keyword>
<keyword id="KW-0560">Oxidoreductase</keyword>
<keyword id="KW-1185">Reference proteome</keyword>
<sequence>MSTLNIAVAGSSGRMGRALLEAVERAPDMRLSAALERSGSPYLGKDAGELIGSPCGIGITDNVDTALDGSQVLVDFTRPDGTLVHVDRCREKNIKMVIGTTGFSPRQKEALWIASRDIAIVLAPNMSVGVNVTLKLLETAARVLNEDYDIEIIEAHHRHKVDAPSGTALLMGEVVAKALGKELSEVAVYSREGHTGEREAGSIGFATVRGGDIVGDHTVMFAGTGERIEISHKASSRATFAEGALRAARFLADKRNGMFDMQDVLGLRQ</sequence>
<reference key="1">
    <citation type="submission" date="2005-08" db="EMBL/GenBank/DDBJ databases">
        <title>Complete sequence of chromosome 1 of Nitrosospira multiformis ATCC 25196.</title>
        <authorList>
            <person name="Copeland A."/>
            <person name="Lucas S."/>
            <person name="Lapidus A."/>
            <person name="Barry K."/>
            <person name="Detter J.C."/>
            <person name="Glavina T."/>
            <person name="Hammon N."/>
            <person name="Israni S."/>
            <person name="Pitluck S."/>
            <person name="Chain P."/>
            <person name="Malfatti S."/>
            <person name="Shin M."/>
            <person name="Vergez L."/>
            <person name="Schmutz J."/>
            <person name="Larimer F."/>
            <person name="Land M."/>
            <person name="Hauser L."/>
            <person name="Kyrpides N."/>
            <person name="Lykidis A."/>
            <person name="Richardson P."/>
        </authorList>
    </citation>
    <scope>NUCLEOTIDE SEQUENCE [LARGE SCALE GENOMIC DNA]</scope>
    <source>
        <strain>ATCC 25196 / NCIMB 11849 / C 71</strain>
    </source>
</reference>
<name>DAPB_NITMU</name>
<dbReference type="EC" id="1.17.1.8" evidence="1"/>
<dbReference type="EMBL" id="CP000103">
    <property type="protein sequence ID" value="ABB73785.1"/>
    <property type="molecule type" value="Genomic_DNA"/>
</dbReference>
<dbReference type="RefSeq" id="WP_011379839.1">
    <property type="nucleotide sequence ID" value="NC_007614.1"/>
</dbReference>
<dbReference type="SMR" id="Q2YBT6"/>
<dbReference type="STRING" id="323848.Nmul_A0477"/>
<dbReference type="KEGG" id="nmu:Nmul_A0477"/>
<dbReference type="eggNOG" id="COG0289">
    <property type="taxonomic scope" value="Bacteria"/>
</dbReference>
<dbReference type="HOGENOM" id="CLU_047479_2_1_4"/>
<dbReference type="OrthoDB" id="9790352at2"/>
<dbReference type="UniPathway" id="UPA00034">
    <property type="reaction ID" value="UER00018"/>
</dbReference>
<dbReference type="Proteomes" id="UP000002718">
    <property type="component" value="Chromosome"/>
</dbReference>
<dbReference type="GO" id="GO:0005829">
    <property type="term" value="C:cytosol"/>
    <property type="evidence" value="ECO:0007669"/>
    <property type="project" value="TreeGrafter"/>
</dbReference>
<dbReference type="GO" id="GO:0008839">
    <property type="term" value="F:4-hydroxy-tetrahydrodipicolinate reductase"/>
    <property type="evidence" value="ECO:0007669"/>
    <property type="project" value="UniProtKB-EC"/>
</dbReference>
<dbReference type="GO" id="GO:0051287">
    <property type="term" value="F:NAD binding"/>
    <property type="evidence" value="ECO:0007669"/>
    <property type="project" value="UniProtKB-UniRule"/>
</dbReference>
<dbReference type="GO" id="GO:0050661">
    <property type="term" value="F:NADP binding"/>
    <property type="evidence" value="ECO:0007669"/>
    <property type="project" value="UniProtKB-UniRule"/>
</dbReference>
<dbReference type="GO" id="GO:0016726">
    <property type="term" value="F:oxidoreductase activity, acting on CH or CH2 groups, NAD or NADP as acceptor"/>
    <property type="evidence" value="ECO:0007669"/>
    <property type="project" value="UniProtKB-UniRule"/>
</dbReference>
<dbReference type="GO" id="GO:0019877">
    <property type="term" value="P:diaminopimelate biosynthetic process"/>
    <property type="evidence" value="ECO:0007669"/>
    <property type="project" value="UniProtKB-UniRule"/>
</dbReference>
<dbReference type="GO" id="GO:0009089">
    <property type="term" value="P:lysine biosynthetic process via diaminopimelate"/>
    <property type="evidence" value="ECO:0007669"/>
    <property type="project" value="UniProtKB-UniRule"/>
</dbReference>
<dbReference type="CDD" id="cd02274">
    <property type="entry name" value="DHDPR_N"/>
    <property type="match status" value="1"/>
</dbReference>
<dbReference type="FunFam" id="3.30.360.10:FF:000004">
    <property type="entry name" value="4-hydroxy-tetrahydrodipicolinate reductase"/>
    <property type="match status" value="1"/>
</dbReference>
<dbReference type="Gene3D" id="3.30.360.10">
    <property type="entry name" value="Dihydrodipicolinate Reductase, domain 2"/>
    <property type="match status" value="1"/>
</dbReference>
<dbReference type="Gene3D" id="3.40.50.720">
    <property type="entry name" value="NAD(P)-binding Rossmann-like Domain"/>
    <property type="match status" value="1"/>
</dbReference>
<dbReference type="HAMAP" id="MF_00102">
    <property type="entry name" value="DapB"/>
    <property type="match status" value="1"/>
</dbReference>
<dbReference type="InterPro" id="IPR022663">
    <property type="entry name" value="DapB_C"/>
</dbReference>
<dbReference type="InterPro" id="IPR000846">
    <property type="entry name" value="DapB_N"/>
</dbReference>
<dbReference type="InterPro" id="IPR022664">
    <property type="entry name" value="DapB_N_CS"/>
</dbReference>
<dbReference type="InterPro" id="IPR023940">
    <property type="entry name" value="DHDPR_bac"/>
</dbReference>
<dbReference type="InterPro" id="IPR036291">
    <property type="entry name" value="NAD(P)-bd_dom_sf"/>
</dbReference>
<dbReference type="NCBIfam" id="TIGR00036">
    <property type="entry name" value="dapB"/>
    <property type="match status" value="1"/>
</dbReference>
<dbReference type="PANTHER" id="PTHR20836:SF0">
    <property type="entry name" value="4-HYDROXY-TETRAHYDRODIPICOLINATE REDUCTASE 1, CHLOROPLASTIC-RELATED"/>
    <property type="match status" value="1"/>
</dbReference>
<dbReference type="PANTHER" id="PTHR20836">
    <property type="entry name" value="DIHYDRODIPICOLINATE REDUCTASE"/>
    <property type="match status" value="1"/>
</dbReference>
<dbReference type="Pfam" id="PF05173">
    <property type="entry name" value="DapB_C"/>
    <property type="match status" value="1"/>
</dbReference>
<dbReference type="Pfam" id="PF01113">
    <property type="entry name" value="DapB_N"/>
    <property type="match status" value="1"/>
</dbReference>
<dbReference type="PIRSF" id="PIRSF000161">
    <property type="entry name" value="DHPR"/>
    <property type="match status" value="1"/>
</dbReference>
<dbReference type="SUPFAM" id="SSF55347">
    <property type="entry name" value="Glyceraldehyde-3-phosphate dehydrogenase-like, C-terminal domain"/>
    <property type="match status" value="1"/>
</dbReference>
<dbReference type="SUPFAM" id="SSF51735">
    <property type="entry name" value="NAD(P)-binding Rossmann-fold domains"/>
    <property type="match status" value="1"/>
</dbReference>
<dbReference type="PROSITE" id="PS01298">
    <property type="entry name" value="DAPB"/>
    <property type="match status" value="1"/>
</dbReference>
<evidence type="ECO:0000255" key="1">
    <source>
        <dbReference type="HAMAP-Rule" id="MF_00102"/>
    </source>
</evidence>
<evidence type="ECO:0000305" key="2"/>
<comment type="function">
    <text evidence="1">Catalyzes the conversion of 4-hydroxy-tetrahydrodipicolinate (HTPA) to tetrahydrodipicolinate.</text>
</comment>
<comment type="catalytic activity">
    <reaction evidence="1">
        <text>(S)-2,3,4,5-tetrahydrodipicolinate + NAD(+) + H2O = (2S,4S)-4-hydroxy-2,3,4,5-tetrahydrodipicolinate + NADH + H(+)</text>
        <dbReference type="Rhea" id="RHEA:35323"/>
        <dbReference type="ChEBI" id="CHEBI:15377"/>
        <dbReference type="ChEBI" id="CHEBI:15378"/>
        <dbReference type="ChEBI" id="CHEBI:16845"/>
        <dbReference type="ChEBI" id="CHEBI:57540"/>
        <dbReference type="ChEBI" id="CHEBI:57945"/>
        <dbReference type="ChEBI" id="CHEBI:67139"/>
        <dbReference type="EC" id="1.17.1.8"/>
    </reaction>
</comment>
<comment type="catalytic activity">
    <reaction evidence="1">
        <text>(S)-2,3,4,5-tetrahydrodipicolinate + NADP(+) + H2O = (2S,4S)-4-hydroxy-2,3,4,5-tetrahydrodipicolinate + NADPH + H(+)</text>
        <dbReference type="Rhea" id="RHEA:35331"/>
        <dbReference type="ChEBI" id="CHEBI:15377"/>
        <dbReference type="ChEBI" id="CHEBI:15378"/>
        <dbReference type="ChEBI" id="CHEBI:16845"/>
        <dbReference type="ChEBI" id="CHEBI:57783"/>
        <dbReference type="ChEBI" id="CHEBI:58349"/>
        <dbReference type="ChEBI" id="CHEBI:67139"/>
        <dbReference type="EC" id="1.17.1.8"/>
    </reaction>
</comment>
<comment type="pathway">
    <text evidence="1">Amino-acid biosynthesis; L-lysine biosynthesis via DAP pathway; (S)-tetrahydrodipicolinate from L-aspartate: step 4/4.</text>
</comment>
<comment type="subcellular location">
    <subcellularLocation>
        <location evidence="1">Cytoplasm</location>
    </subcellularLocation>
</comment>
<comment type="similarity">
    <text evidence="1">Belongs to the DapB family.</text>
</comment>
<comment type="caution">
    <text evidence="2">Was originally thought to be a dihydrodipicolinate reductase (DHDPR), catalyzing the conversion of dihydrodipicolinate to tetrahydrodipicolinate. However, it was shown in E.coli that the substrate of the enzymatic reaction is not dihydrodipicolinate (DHDP) but in fact (2S,4S)-4-hydroxy-2,3,4,5-tetrahydrodipicolinic acid (HTPA), the product released by the DapA-catalyzed reaction.</text>
</comment>
<organism>
    <name type="scientific">Nitrosospira multiformis (strain ATCC 25196 / NCIMB 11849 / C 71)</name>
    <dbReference type="NCBI Taxonomy" id="323848"/>
    <lineage>
        <taxon>Bacteria</taxon>
        <taxon>Pseudomonadati</taxon>
        <taxon>Pseudomonadota</taxon>
        <taxon>Betaproteobacteria</taxon>
        <taxon>Nitrosomonadales</taxon>
        <taxon>Nitrosomonadaceae</taxon>
        <taxon>Nitrosospira</taxon>
    </lineage>
</organism>
<feature type="chain" id="PRO_1000008607" description="4-hydroxy-tetrahydrodipicolinate reductase">
    <location>
        <begin position="1"/>
        <end position="269"/>
    </location>
</feature>
<feature type="active site" description="Proton donor/acceptor" evidence="1">
    <location>
        <position position="156"/>
    </location>
</feature>
<feature type="active site" description="Proton donor" evidence="1">
    <location>
        <position position="160"/>
    </location>
</feature>
<feature type="binding site" evidence="1">
    <location>
        <begin position="10"/>
        <end position="15"/>
    </location>
    <ligand>
        <name>NAD(+)</name>
        <dbReference type="ChEBI" id="CHEBI:57540"/>
    </ligand>
</feature>
<feature type="binding site" evidence="1">
    <location>
        <position position="36"/>
    </location>
    <ligand>
        <name>NAD(+)</name>
        <dbReference type="ChEBI" id="CHEBI:57540"/>
    </ligand>
</feature>
<feature type="binding site" evidence="1">
    <location>
        <position position="37"/>
    </location>
    <ligand>
        <name>NADP(+)</name>
        <dbReference type="ChEBI" id="CHEBI:58349"/>
    </ligand>
</feature>
<feature type="binding site" evidence="1">
    <location>
        <begin position="99"/>
        <end position="101"/>
    </location>
    <ligand>
        <name>NAD(+)</name>
        <dbReference type="ChEBI" id="CHEBI:57540"/>
    </ligand>
</feature>
<feature type="binding site" evidence="1">
    <location>
        <begin position="123"/>
        <end position="126"/>
    </location>
    <ligand>
        <name>NAD(+)</name>
        <dbReference type="ChEBI" id="CHEBI:57540"/>
    </ligand>
</feature>
<feature type="binding site" evidence="1">
    <location>
        <position position="157"/>
    </location>
    <ligand>
        <name>(S)-2,3,4,5-tetrahydrodipicolinate</name>
        <dbReference type="ChEBI" id="CHEBI:16845"/>
    </ligand>
</feature>
<feature type="binding site" evidence="1">
    <location>
        <begin position="166"/>
        <end position="167"/>
    </location>
    <ligand>
        <name>(S)-2,3,4,5-tetrahydrodipicolinate</name>
        <dbReference type="ChEBI" id="CHEBI:16845"/>
    </ligand>
</feature>